<evidence type="ECO:0000250" key="1">
    <source>
        <dbReference type="UniProtKB" id="Q06321"/>
    </source>
</evidence>
<evidence type="ECO:0000255" key="2"/>
<evidence type="ECO:0000255" key="3">
    <source>
        <dbReference type="PROSITE-ProRule" id="PRU00145"/>
    </source>
</evidence>
<evidence type="ECO:0000256" key="4">
    <source>
        <dbReference type="SAM" id="MobiDB-lite"/>
    </source>
</evidence>
<evidence type="ECO:0000305" key="5"/>
<gene>
    <name evidence="1" type="primary">ATG26</name>
    <name type="ordered locus">AFR681W</name>
</gene>
<reference key="1">
    <citation type="journal article" date="2004" name="Science">
        <title>The Ashbya gossypii genome as a tool for mapping the ancient Saccharomyces cerevisiae genome.</title>
        <authorList>
            <person name="Dietrich F.S."/>
            <person name="Voegeli S."/>
            <person name="Brachat S."/>
            <person name="Lerch A."/>
            <person name="Gates K."/>
            <person name="Steiner S."/>
            <person name="Mohr C."/>
            <person name="Poehlmann R."/>
            <person name="Luedi P."/>
            <person name="Choi S."/>
            <person name="Wing R.A."/>
            <person name="Flavier A."/>
            <person name="Gaffney T.D."/>
            <person name="Philippsen P."/>
        </authorList>
    </citation>
    <scope>NUCLEOTIDE SEQUENCE [LARGE SCALE GENOMIC DNA]</scope>
    <source>
        <strain>ATCC 10895 / CBS 109.51 / FGSC 9923 / NRRL Y-1056</strain>
    </source>
</reference>
<reference key="2">
    <citation type="journal article" date="2013" name="G3 (Bethesda)">
        <title>Genomes of Ashbya fungi isolated from insects reveal four mating-type loci, numerous translocations, lack of transposons, and distinct gene duplications.</title>
        <authorList>
            <person name="Dietrich F.S."/>
            <person name="Voegeli S."/>
            <person name="Kuo S."/>
            <person name="Philippsen P."/>
        </authorList>
    </citation>
    <scope>GENOME REANNOTATION</scope>
    <scope>SEQUENCE REVISION TO 353</scope>
    <source>
        <strain>ATCC 10895 / CBS 109.51 / FGSC 9923 / NRRL Y-1056</strain>
    </source>
</reference>
<sequence>MLKGQKEGEAEPVPEGDKSGAGSSPSGVRKGLRVPLGLVSHSFSSLAKHKEAERRLTDEEESLSSPQDREDDAASPNIMAKSIAGLLTTASMYVGIGDIHRAEQLATGQPETDAGADETEDEMDEAGDETGDDADAPATGTDGEEESRPVSAQESRRSTLFELSIEPHPESHTAQASRTKNRRSRMTSKLRSKFNLDDDEELVREYPCWLLRDVLIQGHIYLTSRNLLFFAFLYKSNGSARLTGNLSICNNGLSISGISGKPTRYWTVLKDHTLSLYSSSTDLYFPVLTIDLRYVTKVQHCKNNGKDTRQFHITTESKTYTFYSDNEHSARSWSSALKKQVFATQNSDNDSMSVRIPLSNIIDVEEQAIVEQGLTLRVRVMESSDSFALDDYFFMFFNNAGSQLKELIQIQVANLEMLGAANVDYARHPLPPDTEASLPAVASDAAPQDAAIASEAAADAAAADTASHSPSTNAEPRARGRSTERAMAASAYLFGRLTSPRRDDAKQLSPSKVKLRFRSVADTLKLTTPRQPGSDAPQEPEPETTILESRPRLNYWSPRPFTTMRSMWNAQPVHYAAKGMSLFADDDELMIGDEAELLAADKRFKAHFSLTDDESLVASYYTYLNRSMPLYGKIYLGKTIMCFRSLLPGSKTKMILPLHDVENCYKEQGFRFGYFGLVVVIYGHEELFFEFASQKSRDDAEYVILKIIDSLKPVDGVMADDMSAGAYSLKAAQGRDATTDAKVKLFEQRISSVGYDIPIMVEDNPFYKTTITPKKFYTFGMLTIGSRGDVQPYIALGKGLLQEGHRVVVISHAEFGDWVRSHGLQFRAIAGDPAELMALMVQHGSMNVGLIREAASTFRNWIRDLLETAWEACQGIDVLIESPSAMAGIHIAEALQIPYFRAFTMPWTKTRSYPHAFIVPDQKRGGNYNYFTHVLFENIFWKGINSQVNRWRVEKLGLKKTNLEFMQQGKVPFLYNMSPTVFPPSVDFAEWIKVTGYWFLNESSNYVPPQALLEFMAKARRLDKKLVYIGFGSIVVKDPVKMTMAVVEAVVKADVYCILNKGWSARLGGQSQKSIEVQLPNCVYDAGNVPHDWLFPRVDAAVHHGGSGTTGATMRAGVPTVIKPFFGDQYFYANRIEDIGAGIALRKLNACTLSRALKEVTTNTRIIAKAKKIGQDISKEDGVATAIAFIYSEMAYAKSLIKAKRQEDKKAAKEAKQIQNEDSWLLL</sequence>
<comment type="function">
    <text evidence="1">Sterol glycosyltransferase responsible for the glycosylation of ergosterol to form ergosterol-glucoside.</text>
</comment>
<comment type="catalytic activity">
    <reaction evidence="1">
        <text>a sterol + UDP-alpha-D-glucose = a sterol 3-beta-D-glucoside + UDP + H(+)</text>
        <dbReference type="Rhea" id="RHEA:22724"/>
        <dbReference type="ChEBI" id="CHEBI:15378"/>
        <dbReference type="ChEBI" id="CHEBI:15889"/>
        <dbReference type="ChEBI" id="CHEBI:37424"/>
        <dbReference type="ChEBI" id="CHEBI:58223"/>
        <dbReference type="ChEBI" id="CHEBI:58885"/>
        <dbReference type="EC" id="2.4.1.173"/>
    </reaction>
    <physiologicalReaction direction="left-to-right" evidence="1">
        <dbReference type="Rhea" id="RHEA:22725"/>
    </physiologicalReaction>
</comment>
<comment type="catalytic activity">
    <reaction evidence="1">
        <text>ergosterol + UDP-alpha-D-glucose = ergosteryl 3-beta-D-glucoside + UDP + H(+)</text>
        <dbReference type="Rhea" id="RHEA:61836"/>
        <dbReference type="ChEBI" id="CHEBI:15378"/>
        <dbReference type="ChEBI" id="CHEBI:16933"/>
        <dbReference type="ChEBI" id="CHEBI:52973"/>
        <dbReference type="ChEBI" id="CHEBI:58223"/>
        <dbReference type="ChEBI" id="CHEBI:58885"/>
    </reaction>
    <physiologicalReaction direction="left-to-right" evidence="1">
        <dbReference type="Rhea" id="RHEA:61837"/>
    </physiologicalReaction>
</comment>
<comment type="subcellular location">
    <subcellularLocation>
        <location evidence="1">Cytoplasm</location>
    </subcellularLocation>
    <subcellularLocation>
        <location evidence="1">Membrane</location>
        <topology evidence="1">Peripheral membrane protein</topology>
    </subcellularLocation>
</comment>
<comment type="similarity">
    <text evidence="5">Belongs to the glycosyltransferase 28 family.</text>
</comment>
<accession>Q751Z4</accession>
<organism>
    <name type="scientific">Eremothecium gossypii (strain ATCC 10895 / CBS 109.51 / FGSC 9923 / NRRL Y-1056)</name>
    <name type="common">Yeast</name>
    <name type="synonym">Ashbya gossypii</name>
    <dbReference type="NCBI Taxonomy" id="284811"/>
    <lineage>
        <taxon>Eukaryota</taxon>
        <taxon>Fungi</taxon>
        <taxon>Dikarya</taxon>
        <taxon>Ascomycota</taxon>
        <taxon>Saccharomycotina</taxon>
        <taxon>Saccharomycetes</taxon>
        <taxon>Saccharomycetales</taxon>
        <taxon>Saccharomycetaceae</taxon>
        <taxon>Eremothecium</taxon>
    </lineage>
</organism>
<name>ATG26_EREGS</name>
<keyword id="KW-0963">Cytoplasm</keyword>
<keyword id="KW-0328">Glycosyltransferase</keyword>
<keyword id="KW-0444">Lipid biosynthesis</keyword>
<keyword id="KW-0443">Lipid metabolism</keyword>
<keyword id="KW-0472">Membrane</keyword>
<keyword id="KW-1185">Reference proteome</keyword>
<keyword id="KW-0677">Repeat</keyword>
<keyword id="KW-0752">Steroid biosynthesis</keyword>
<keyword id="KW-0753">Steroid metabolism</keyword>
<keyword id="KW-0756">Sterol biosynthesis</keyword>
<keyword id="KW-1207">Sterol metabolism</keyword>
<keyword id="KW-0808">Transferase</keyword>
<proteinExistence type="inferred from homology"/>
<feature type="chain" id="PRO_0000215606" description="Sterol 3-beta-glucosyltransferase">
    <location>
        <begin position="1"/>
        <end position="1227"/>
    </location>
</feature>
<feature type="domain" description="GRAM 1" evidence="2">
    <location>
        <begin position="188"/>
        <end position="229"/>
    </location>
</feature>
<feature type="domain" description="PH" evidence="3">
    <location>
        <begin position="239"/>
        <end position="342"/>
    </location>
</feature>
<feature type="domain" description="GRAM 2" evidence="2">
    <location>
        <begin position="602"/>
        <end position="668"/>
    </location>
</feature>
<feature type="region of interest" description="Disordered" evidence="4">
    <location>
        <begin position="1"/>
        <end position="76"/>
    </location>
</feature>
<feature type="region of interest" description="Disordered" evidence="4">
    <location>
        <begin position="104"/>
        <end position="189"/>
    </location>
</feature>
<feature type="region of interest" description="Disordered" evidence="4">
    <location>
        <begin position="449"/>
        <end position="484"/>
    </location>
</feature>
<feature type="region of interest" description="Disordered" evidence="4">
    <location>
        <begin position="523"/>
        <end position="550"/>
    </location>
</feature>
<feature type="compositionally biased region" description="Basic and acidic residues" evidence="4">
    <location>
        <begin position="48"/>
        <end position="57"/>
    </location>
</feature>
<feature type="compositionally biased region" description="Acidic residues" evidence="4">
    <location>
        <begin position="114"/>
        <end position="135"/>
    </location>
</feature>
<feature type="compositionally biased region" description="Basic and acidic residues" evidence="4">
    <location>
        <begin position="154"/>
        <end position="171"/>
    </location>
</feature>
<feature type="compositionally biased region" description="Basic residues" evidence="4">
    <location>
        <begin position="179"/>
        <end position="189"/>
    </location>
</feature>
<feature type="compositionally biased region" description="Low complexity" evidence="4">
    <location>
        <begin position="449"/>
        <end position="469"/>
    </location>
</feature>
<feature type="binding site" evidence="1">
    <location>
        <position position="786"/>
    </location>
    <ligand>
        <name>UDP-alpha-D-glucose</name>
        <dbReference type="ChEBI" id="CHEBI:58885"/>
    </ligand>
</feature>
<feature type="binding site" evidence="1">
    <location>
        <position position="787"/>
    </location>
    <ligand>
        <name>UDP-alpha-D-glucose</name>
        <dbReference type="ChEBI" id="CHEBI:58885"/>
    </ligand>
</feature>
<feature type="binding site" evidence="1">
    <location>
        <position position="789"/>
    </location>
    <ligand>
        <name>UDP-alpha-D-glucose</name>
        <dbReference type="ChEBI" id="CHEBI:58885"/>
    </ligand>
</feature>
<feature type="binding site" evidence="1">
    <location>
        <position position="1060"/>
    </location>
    <ligand>
        <name>UDP-alpha-D-glucose</name>
        <dbReference type="ChEBI" id="CHEBI:58885"/>
    </ligand>
</feature>
<feature type="binding site" evidence="1">
    <location>
        <position position="1088"/>
    </location>
    <ligand>
        <name>UDP-alpha-D-glucose</name>
        <dbReference type="ChEBI" id="CHEBI:58885"/>
    </ligand>
</feature>
<feature type="binding site" evidence="1">
    <location>
        <position position="1089"/>
    </location>
    <ligand>
        <name>UDP-alpha-D-glucose</name>
        <dbReference type="ChEBI" id="CHEBI:58885"/>
    </ligand>
</feature>
<feature type="binding site" evidence="1">
    <location>
        <position position="1091"/>
    </location>
    <ligand>
        <name>UDP-alpha-D-glucose</name>
        <dbReference type="ChEBI" id="CHEBI:58885"/>
    </ligand>
</feature>
<feature type="binding site" evidence="1">
    <location>
        <position position="1104"/>
    </location>
    <ligand>
        <name>UDP-alpha-D-glucose</name>
        <dbReference type="ChEBI" id="CHEBI:58885"/>
    </ligand>
</feature>
<feature type="binding site" evidence="1">
    <location>
        <position position="1107"/>
    </location>
    <ligand>
        <name>UDP-alpha-D-glucose</name>
        <dbReference type="ChEBI" id="CHEBI:58885"/>
    </ligand>
</feature>
<feature type="binding site" evidence="1">
    <location>
        <position position="1108"/>
    </location>
    <ligand>
        <name>UDP-alpha-D-glucose</name>
        <dbReference type="ChEBI" id="CHEBI:58885"/>
    </ligand>
</feature>
<feature type="binding site" evidence="1">
    <location>
        <position position="1109"/>
    </location>
    <ligand>
        <name>UDP-alpha-D-glucose</name>
        <dbReference type="ChEBI" id="CHEBI:58885"/>
    </ligand>
</feature>
<feature type="binding site" evidence="1">
    <location>
        <position position="1128"/>
    </location>
    <ligand>
        <name>UDP-alpha-D-glucose</name>
        <dbReference type="ChEBI" id="CHEBI:58885"/>
    </ligand>
</feature>
<feature type="binding site" evidence="1">
    <location>
        <position position="1129"/>
    </location>
    <ligand>
        <name>UDP-alpha-D-glucose</name>
        <dbReference type="ChEBI" id="CHEBI:58885"/>
    </ligand>
</feature>
<protein>
    <recommendedName>
        <fullName evidence="5">Sterol 3-beta-glucosyltransferase</fullName>
        <ecNumber evidence="1">2.4.1.-</ecNumber>
        <ecNumber evidence="1">2.4.1.173</ecNumber>
    </recommendedName>
    <alternativeName>
        <fullName evidence="1">Autophagy-related protein 26</fullName>
    </alternativeName>
</protein>
<dbReference type="EC" id="2.4.1.-" evidence="1"/>
<dbReference type="EC" id="2.4.1.173" evidence="1"/>
<dbReference type="EMBL" id="AE016819">
    <property type="protein sequence ID" value="AAS54053.2"/>
    <property type="molecule type" value="Genomic_DNA"/>
</dbReference>
<dbReference type="RefSeq" id="NP_986229.2">
    <property type="nucleotide sequence ID" value="NM_212365.2"/>
</dbReference>
<dbReference type="SMR" id="Q751Z4"/>
<dbReference type="FunCoup" id="Q751Z4">
    <property type="interactions" value="120"/>
</dbReference>
<dbReference type="STRING" id="284811.Q751Z4"/>
<dbReference type="CAZy" id="GT1">
    <property type="family name" value="Glycosyltransferase Family 1"/>
</dbReference>
<dbReference type="EnsemblFungi" id="AAS54053">
    <property type="protein sequence ID" value="AAS54053"/>
    <property type="gene ID" value="AGOS_AFR681W"/>
</dbReference>
<dbReference type="GeneID" id="4622518"/>
<dbReference type="KEGG" id="ago:AGOS_AFR681W"/>
<dbReference type="eggNOG" id="KOG1192">
    <property type="taxonomic scope" value="Eukaryota"/>
</dbReference>
<dbReference type="HOGENOM" id="CLU_000537_6_0_1"/>
<dbReference type="InParanoid" id="Q751Z4"/>
<dbReference type="OMA" id="WRNKTLG"/>
<dbReference type="OrthoDB" id="10261837at2759"/>
<dbReference type="Proteomes" id="UP000000591">
    <property type="component" value="Chromosome VI"/>
</dbReference>
<dbReference type="GO" id="GO:0005737">
    <property type="term" value="C:cytoplasm"/>
    <property type="evidence" value="ECO:0007669"/>
    <property type="project" value="UniProtKB-SubCell"/>
</dbReference>
<dbReference type="GO" id="GO:0016020">
    <property type="term" value="C:membrane"/>
    <property type="evidence" value="ECO:0007669"/>
    <property type="project" value="UniProtKB-SubCell"/>
</dbReference>
<dbReference type="GO" id="GO:0016906">
    <property type="term" value="F:sterol 3-beta-glucosyltransferase activity"/>
    <property type="evidence" value="ECO:0007669"/>
    <property type="project" value="UniProtKB-EC"/>
</dbReference>
<dbReference type="GO" id="GO:0008194">
    <property type="term" value="F:UDP-glycosyltransferase activity"/>
    <property type="evidence" value="ECO:0000318"/>
    <property type="project" value="GO_Central"/>
</dbReference>
<dbReference type="GO" id="GO:0032120">
    <property type="term" value="P:ascospore-type prospore membrane formation"/>
    <property type="evidence" value="ECO:0007669"/>
    <property type="project" value="EnsemblFungi"/>
</dbReference>
<dbReference type="GO" id="GO:0005975">
    <property type="term" value="P:carbohydrate metabolic process"/>
    <property type="evidence" value="ECO:0007669"/>
    <property type="project" value="InterPro"/>
</dbReference>
<dbReference type="GO" id="GO:0030259">
    <property type="term" value="P:lipid glycosylation"/>
    <property type="evidence" value="ECO:0007669"/>
    <property type="project" value="InterPro"/>
</dbReference>
<dbReference type="GO" id="GO:0016126">
    <property type="term" value="P:sterol biosynthetic process"/>
    <property type="evidence" value="ECO:0007669"/>
    <property type="project" value="UniProtKB-KW"/>
</dbReference>
<dbReference type="GO" id="GO:0016125">
    <property type="term" value="P:sterol metabolic process"/>
    <property type="evidence" value="ECO:0000318"/>
    <property type="project" value="GO_Central"/>
</dbReference>
<dbReference type="CDD" id="cd03784">
    <property type="entry name" value="GT1_Gtf-like"/>
    <property type="match status" value="1"/>
</dbReference>
<dbReference type="CDD" id="cd13215">
    <property type="entry name" value="PH-GRAM1_AGT26"/>
    <property type="match status" value="1"/>
</dbReference>
<dbReference type="CDD" id="cd13216">
    <property type="entry name" value="PH-GRAM2_AGT26"/>
    <property type="match status" value="1"/>
</dbReference>
<dbReference type="FunFam" id="2.30.29.30:FF:000303">
    <property type="entry name" value="Sterol 3-beta-glucosyltransferase"/>
    <property type="match status" value="1"/>
</dbReference>
<dbReference type="FunFam" id="2.30.29.30:FF:000391">
    <property type="entry name" value="Sterol 3-beta-glucosyltransferase"/>
    <property type="match status" value="1"/>
</dbReference>
<dbReference type="FunFam" id="3.40.50.2000:FF:000029">
    <property type="entry name" value="Sterol 3-beta-glucosyltransferase"/>
    <property type="match status" value="1"/>
</dbReference>
<dbReference type="FunFam" id="3.40.50.2000:FF:000009">
    <property type="entry name" value="Sterol 3-beta-glucosyltransferase UGT80A2"/>
    <property type="match status" value="1"/>
</dbReference>
<dbReference type="Gene3D" id="3.40.50.2000">
    <property type="entry name" value="Glycogen Phosphorylase B"/>
    <property type="match status" value="2"/>
</dbReference>
<dbReference type="Gene3D" id="2.30.29.30">
    <property type="entry name" value="Pleckstrin-homology domain (PH domain)/Phosphotyrosine-binding domain (PTB)"/>
    <property type="match status" value="2"/>
</dbReference>
<dbReference type="InterPro" id="IPR048066">
    <property type="entry name" value="ATG26_PH_GRAM1"/>
</dbReference>
<dbReference type="InterPro" id="IPR048065">
    <property type="entry name" value="ATG26_PH_GRAM2"/>
</dbReference>
<dbReference type="InterPro" id="IPR010610">
    <property type="entry name" value="EryCIII-like_C"/>
</dbReference>
<dbReference type="InterPro" id="IPR050426">
    <property type="entry name" value="Glycosyltransferase_28"/>
</dbReference>
<dbReference type="InterPro" id="IPR004276">
    <property type="entry name" value="GlycoTrans_28_N"/>
</dbReference>
<dbReference type="InterPro" id="IPR004182">
    <property type="entry name" value="GRAM"/>
</dbReference>
<dbReference type="InterPro" id="IPR011993">
    <property type="entry name" value="PH-like_dom_sf"/>
</dbReference>
<dbReference type="InterPro" id="IPR001849">
    <property type="entry name" value="PH_domain"/>
</dbReference>
<dbReference type="InterPro" id="IPR002213">
    <property type="entry name" value="UDP_glucos_trans"/>
</dbReference>
<dbReference type="PANTHER" id="PTHR48050">
    <property type="entry name" value="STEROL 3-BETA-GLUCOSYLTRANSFERASE"/>
    <property type="match status" value="1"/>
</dbReference>
<dbReference type="PANTHER" id="PTHR48050:SF25">
    <property type="entry name" value="STEROL 3-BETA-GLUCOSYLTRANSFERASE"/>
    <property type="match status" value="1"/>
</dbReference>
<dbReference type="Pfam" id="PF06722">
    <property type="entry name" value="EryCIII-like_C"/>
    <property type="match status" value="1"/>
</dbReference>
<dbReference type="Pfam" id="PF03033">
    <property type="entry name" value="Glyco_transf_28"/>
    <property type="match status" value="1"/>
</dbReference>
<dbReference type="Pfam" id="PF02893">
    <property type="entry name" value="GRAM"/>
    <property type="match status" value="2"/>
</dbReference>
<dbReference type="Pfam" id="PF00169">
    <property type="entry name" value="PH"/>
    <property type="match status" value="1"/>
</dbReference>
<dbReference type="SMART" id="SM00568">
    <property type="entry name" value="GRAM"/>
    <property type="match status" value="2"/>
</dbReference>
<dbReference type="SMART" id="SM00233">
    <property type="entry name" value="PH"/>
    <property type="match status" value="1"/>
</dbReference>
<dbReference type="SUPFAM" id="SSF50729">
    <property type="entry name" value="PH domain-like"/>
    <property type="match status" value="1"/>
</dbReference>
<dbReference type="SUPFAM" id="SSF53756">
    <property type="entry name" value="UDP-Glycosyltransferase/glycogen phosphorylase"/>
    <property type="match status" value="1"/>
</dbReference>
<dbReference type="PROSITE" id="PS50003">
    <property type="entry name" value="PH_DOMAIN"/>
    <property type="match status" value="1"/>
</dbReference>